<sequence length="598" mass="66855">MLKTHSCALTQENIGTEVTLAGWVHRRRDHGGVIFIDLRDREGIVQVVFNPEQSAACLDIGKELRSEYVLQVKGTVSHRPAGTENSRMLSGLVEVVAEGAKILNTAKTPPFYINEEVEVDESLRLKYRYLDIRRQGMKNNLIIRHKTVSFMRQFLNDRGFIEIETPILIKSTPEGARDYLVPSRLFPGQFFALPQSPQQLKQLLMVAGMEKYYQVARCFRDEDLRADRQPEFTQLDMEMSFVDENDMMQLMEDLFTGLVASVRPDMKYNKKFPRISFADAMEKYGCDKPDLRFGMELADITDIGASSAFGVFKNVAAQGGAIKAISAPGCGGYNKSQQEELINLAKKYGAAGLVPISLGAESGELKDLTMEMVKSVSAKYLTLEEIKTIAERSGAKPGGLILIVAGARKMVNSVLGEMRNHLAAKLDLCDKNELSFAFVVDFPLFQWDEEGKRWDSVHHPFTAPLESDLPLMDTDPARVGSRAYDVVCNGYEIAGGSIRIHQADLQRKVFHLLGYNNEQIDERFGHLLEAFEFGAPPHGGVAPGIDRFVMLLAGETSIREVIPFPKNQAAQDLLFGAPSVVDDKQIRDLHIRIQTEKE</sequence>
<comment type="function">
    <text evidence="1">Aspartyl-tRNA synthetase with relaxed tRNA specificity since it is able to aspartylate not only its cognate tRNA(Asp) but also tRNA(Asn). Reaction proceeds in two steps: L-aspartate is first activated by ATP to form Asp-AMP and then transferred to the acceptor end of tRNA(Asp/Asn).</text>
</comment>
<comment type="catalytic activity">
    <reaction evidence="1">
        <text>tRNA(Asx) + L-aspartate + ATP = L-aspartyl-tRNA(Asx) + AMP + diphosphate</text>
        <dbReference type="Rhea" id="RHEA:18349"/>
        <dbReference type="Rhea" id="RHEA-COMP:9710"/>
        <dbReference type="Rhea" id="RHEA-COMP:9711"/>
        <dbReference type="ChEBI" id="CHEBI:29991"/>
        <dbReference type="ChEBI" id="CHEBI:30616"/>
        <dbReference type="ChEBI" id="CHEBI:33019"/>
        <dbReference type="ChEBI" id="CHEBI:78442"/>
        <dbReference type="ChEBI" id="CHEBI:78516"/>
        <dbReference type="ChEBI" id="CHEBI:456215"/>
        <dbReference type="EC" id="6.1.1.23"/>
    </reaction>
</comment>
<comment type="subunit">
    <text evidence="1">Homodimer.</text>
</comment>
<comment type="subcellular location">
    <subcellularLocation>
        <location evidence="1">Cytoplasm</location>
    </subcellularLocation>
</comment>
<comment type="similarity">
    <text evidence="1">Belongs to the class-II aminoacyl-tRNA synthetase family. Type 1 subfamily.</text>
</comment>
<dbReference type="EC" id="6.1.1.23" evidence="1"/>
<dbReference type="EMBL" id="CP000027">
    <property type="protein sequence ID" value="AAW39989.1"/>
    <property type="molecule type" value="Genomic_DNA"/>
</dbReference>
<dbReference type="RefSeq" id="WP_010936450.1">
    <property type="nucleotide sequence ID" value="NC_002936.3"/>
</dbReference>
<dbReference type="SMR" id="Q3Z8K0"/>
<dbReference type="FunCoup" id="Q3Z8K0">
    <property type="interactions" value="345"/>
</dbReference>
<dbReference type="STRING" id="243164.DET0708"/>
<dbReference type="GeneID" id="3229951"/>
<dbReference type="KEGG" id="det:DET0708"/>
<dbReference type="PATRIC" id="fig|243164.10.peg.682"/>
<dbReference type="eggNOG" id="COG0173">
    <property type="taxonomic scope" value="Bacteria"/>
</dbReference>
<dbReference type="HOGENOM" id="CLU_014330_3_2_0"/>
<dbReference type="InParanoid" id="Q3Z8K0"/>
<dbReference type="Proteomes" id="UP000008289">
    <property type="component" value="Chromosome"/>
</dbReference>
<dbReference type="GO" id="GO:0005737">
    <property type="term" value="C:cytoplasm"/>
    <property type="evidence" value="ECO:0007669"/>
    <property type="project" value="UniProtKB-SubCell"/>
</dbReference>
<dbReference type="GO" id="GO:0004815">
    <property type="term" value="F:aspartate-tRNA ligase activity"/>
    <property type="evidence" value="ECO:0007669"/>
    <property type="project" value="UniProtKB-UniRule"/>
</dbReference>
<dbReference type="GO" id="GO:0050560">
    <property type="term" value="F:aspartate-tRNA(Asn) ligase activity"/>
    <property type="evidence" value="ECO:0007669"/>
    <property type="project" value="UniProtKB-EC"/>
</dbReference>
<dbReference type="GO" id="GO:0005524">
    <property type="term" value="F:ATP binding"/>
    <property type="evidence" value="ECO:0007669"/>
    <property type="project" value="UniProtKB-UniRule"/>
</dbReference>
<dbReference type="GO" id="GO:0003676">
    <property type="term" value="F:nucleic acid binding"/>
    <property type="evidence" value="ECO:0007669"/>
    <property type="project" value="InterPro"/>
</dbReference>
<dbReference type="GO" id="GO:0006422">
    <property type="term" value="P:aspartyl-tRNA aminoacylation"/>
    <property type="evidence" value="ECO:0007669"/>
    <property type="project" value="UniProtKB-UniRule"/>
</dbReference>
<dbReference type="CDD" id="cd00777">
    <property type="entry name" value="AspRS_core"/>
    <property type="match status" value="1"/>
</dbReference>
<dbReference type="CDD" id="cd04317">
    <property type="entry name" value="EcAspRS_like_N"/>
    <property type="match status" value="1"/>
</dbReference>
<dbReference type="Gene3D" id="3.30.930.10">
    <property type="entry name" value="Bira Bifunctional Protein, Domain 2"/>
    <property type="match status" value="1"/>
</dbReference>
<dbReference type="Gene3D" id="3.30.1360.30">
    <property type="entry name" value="GAD-like domain"/>
    <property type="match status" value="1"/>
</dbReference>
<dbReference type="Gene3D" id="2.40.50.140">
    <property type="entry name" value="Nucleic acid-binding proteins"/>
    <property type="match status" value="1"/>
</dbReference>
<dbReference type="HAMAP" id="MF_00044">
    <property type="entry name" value="Asp_tRNA_synth_type1"/>
    <property type="match status" value="1"/>
</dbReference>
<dbReference type="InterPro" id="IPR004364">
    <property type="entry name" value="Aa-tRNA-synt_II"/>
</dbReference>
<dbReference type="InterPro" id="IPR006195">
    <property type="entry name" value="aa-tRNA-synth_II"/>
</dbReference>
<dbReference type="InterPro" id="IPR045864">
    <property type="entry name" value="aa-tRNA-synth_II/BPL/LPL"/>
</dbReference>
<dbReference type="InterPro" id="IPR004524">
    <property type="entry name" value="Asp-tRNA-ligase_1"/>
</dbReference>
<dbReference type="InterPro" id="IPR047089">
    <property type="entry name" value="Asp-tRNA-ligase_1_N"/>
</dbReference>
<dbReference type="InterPro" id="IPR002312">
    <property type="entry name" value="Asp/Asn-tRNA-synth_IIb"/>
</dbReference>
<dbReference type="InterPro" id="IPR047090">
    <property type="entry name" value="AspRS_core"/>
</dbReference>
<dbReference type="InterPro" id="IPR004115">
    <property type="entry name" value="GAD-like_sf"/>
</dbReference>
<dbReference type="InterPro" id="IPR029351">
    <property type="entry name" value="GAD_dom"/>
</dbReference>
<dbReference type="InterPro" id="IPR012340">
    <property type="entry name" value="NA-bd_OB-fold"/>
</dbReference>
<dbReference type="InterPro" id="IPR004365">
    <property type="entry name" value="NA-bd_OB_tRNA"/>
</dbReference>
<dbReference type="NCBIfam" id="TIGR00459">
    <property type="entry name" value="aspS_bact"/>
    <property type="match status" value="1"/>
</dbReference>
<dbReference type="NCBIfam" id="NF001750">
    <property type="entry name" value="PRK00476.1"/>
    <property type="match status" value="1"/>
</dbReference>
<dbReference type="PANTHER" id="PTHR22594:SF5">
    <property type="entry name" value="ASPARTATE--TRNA LIGASE, MITOCHONDRIAL"/>
    <property type="match status" value="1"/>
</dbReference>
<dbReference type="PANTHER" id="PTHR22594">
    <property type="entry name" value="ASPARTYL/LYSYL-TRNA SYNTHETASE"/>
    <property type="match status" value="1"/>
</dbReference>
<dbReference type="Pfam" id="PF02938">
    <property type="entry name" value="GAD"/>
    <property type="match status" value="1"/>
</dbReference>
<dbReference type="Pfam" id="PF00152">
    <property type="entry name" value="tRNA-synt_2"/>
    <property type="match status" value="1"/>
</dbReference>
<dbReference type="Pfam" id="PF01336">
    <property type="entry name" value="tRNA_anti-codon"/>
    <property type="match status" value="1"/>
</dbReference>
<dbReference type="PRINTS" id="PR01042">
    <property type="entry name" value="TRNASYNTHASP"/>
</dbReference>
<dbReference type="SUPFAM" id="SSF55681">
    <property type="entry name" value="Class II aaRS and biotin synthetases"/>
    <property type="match status" value="1"/>
</dbReference>
<dbReference type="SUPFAM" id="SSF55261">
    <property type="entry name" value="GAD domain-like"/>
    <property type="match status" value="1"/>
</dbReference>
<dbReference type="SUPFAM" id="SSF50249">
    <property type="entry name" value="Nucleic acid-binding proteins"/>
    <property type="match status" value="1"/>
</dbReference>
<dbReference type="PROSITE" id="PS50862">
    <property type="entry name" value="AA_TRNA_LIGASE_II"/>
    <property type="match status" value="1"/>
</dbReference>
<evidence type="ECO:0000255" key="1">
    <source>
        <dbReference type="HAMAP-Rule" id="MF_00044"/>
    </source>
</evidence>
<proteinExistence type="inferred from homology"/>
<organism>
    <name type="scientific">Dehalococcoides mccartyi (strain ATCC BAA-2266 / KCTC 15142 / 195)</name>
    <name type="common">Dehalococcoides ethenogenes (strain 195)</name>
    <dbReference type="NCBI Taxonomy" id="243164"/>
    <lineage>
        <taxon>Bacteria</taxon>
        <taxon>Bacillati</taxon>
        <taxon>Chloroflexota</taxon>
        <taxon>Dehalococcoidia</taxon>
        <taxon>Dehalococcoidales</taxon>
        <taxon>Dehalococcoidaceae</taxon>
        <taxon>Dehalococcoides</taxon>
    </lineage>
</organism>
<reference key="1">
    <citation type="journal article" date="2005" name="Science">
        <title>Genome sequence of the PCE-dechlorinating bacterium Dehalococcoides ethenogenes.</title>
        <authorList>
            <person name="Seshadri R."/>
            <person name="Adrian L."/>
            <person name="Fouts D.E."/>
            <person name="Eisen J.A."/>
            <person name="Phillippy A.M."/>
            <person name="Methe B.A."/>
            <person name="Ward N.L."/>
            <person name="Nelson W.C."/>
            <person name="DeBoy R.T."/>
            <person name="Khouri H.M."/>
            <person name="Kolonay J.F."/>
            <person name="Dodson R.J."/>
            <person name="Daugherty S.C."/>
            <person name="Brinkac L.M."/>
            <person name="Sullivan S.A."/>
            <person name="Madupu R."/>
            <person name="Nelson K.E."/>
            <person name="Kang K.H."/>
            <person name="Impraim M."/>
            <person name="Tran K."/>
            <person name="Robinson J.M."/>
            <person name="Forberger H.A."/>
            <person name="Fraser C.M."/>
            <person name="Zinder S.H."/>
            <person name="Heidelberg J.F."/>
        </authorList>
    </citation>
    <scope>NUCLEOTIDE SEQUENCE [LARGE SCALE GENOMIC DNA]</scope>
    <source>
        <strain>ATCC BAA-2266 / KCTC 15142 / 195</strain>
    </source>
</reference>
<gene>
    <name evidence="1" type="primary">aspS</name>
    <name type="ordered locus">DET0708</name>
</gene>
<accession>Q3Z8K0</accession>
<name>SYDND_DEHM1</name>
<keyword id="KW-0030">Aminoacyl-tRNA synthetase</keyword>
<keyword id="KW-0067">ATP-binding</keyword>
<keyword id="KW-0963">Cytoplasm</keyword>
<keyword id="KW-0436">Ligase</keyword>
<keyword id="KW-0547">Nucleotide-binding</keyword>
<keyword id="KW-0648">Protein biosynthesis</keyword>
<protein>
    <recommendedName>
        <fullName evidence="1">Aspartate--tRNA(Asp/Asn) ligase</fullName>
        <ecNumber evidence="1">6.1.1.23</ecNumber>
    </recommendedName>
    <alternativeName>
        <fullName evidence="1">Aspartyl-tRNA synthetase</fullName>
        <shortName evidence="1">AspRS</shortName>
    </alternativeName>
    <alternativeName>
        <fullName evidence="1">Non-discriminating aspartyl-tRNA synthetase</fullName>
        <shortName evidence="1">ND-AspRS</shortName>
    </alternativeName>
</protein>
<feature type="chain" id="PRO_0000235523" description="Aspartate--tRNA(Asp/Asn) ligase">
    <location>
        <begin position="1"/>
        <end position="598"/>
    </location>
</feature>
<feature type="region of interest" description="Aspartate" evidence="1">
    <location>
        <begin position="198"/>
        <end position="201"/>
    </location>
</feature>
<feature type="binding site" evidence="1">
    <location>
        <position position="174"/>
    </location>
    <ligand>
        <name>L-aspartate</name>
        <dbReference type="ChEBI" id="CHEBI:29991"/>
    </ligand>
</feature>
<feature type="binding site" evidence="1">
    <location>
        <begin position="220"/>
        <end position="222"/>
    </location>
    <ligand>
        <name>ATP</name>
        <dbReference type="ChEBI" id="CHEBI:30616"/>
    </ligand>
</feature>
<feature type="binding site" evidence="1">
    <location>
        <position position="220"/>
    </location>
    <ligand>
        <name>L-aspartate</name>
        <dbReference type="ChEBI" id="CHEBI:29991"/>
    </ligand>
</feature>
<feature type="binding site" evidence="1">
    <location>
        <position position="229"/>
    </location>
    <ligand>
        <name>ATP</name>
        <dbReference type="ChEBI" id="CHEBI:30616"/>
    </ligand>
</feature>
<feature type="binding site" evidence="1">
    <location>
        <position position="458"/>
    </location>
    <ligand>
        <name>L-aspartate</name>
        <dbReference type="ChEBI" id="CHEBI:29991"/>
    </ligand>
</feature>
<feature type="binding site" evidence="1">
    <location>
        <position position="492"/>
    </location>
    <ligand>
        <name>ATP</name>
        <dbReference type="ChEBI" id="CHEBI:30616"/>
    </ligand>
</feature>
<feature type="binding site" evidence="1">
    <location>
        <position position="499"/>
    </location>
    <ligand>
        <name>L-aspartate</name>
        <dbReference type="ChEBI" id="CHEBI:29991"/>
    </ligand>
</feature>
<feature type="binding site" evidence="1">
    <location>
        <begin position="544"/>
        <end position="547"/>
    </location>
    <ligand>
        <name>ATP</name>
        <dbReference type="ChEBI" id="CHEBI:30616"/>
    </ligand>
</feature>
<feature type="site" description="Important for tRNA non-discrimination" evidence="1">
    <location>
        <position position="30"/>
    </location>
</feature>
<feature type="site" description="Important for tRNA non-discrimination" evidence="1">
    <location>
        <position position="82"/>
    </location>
</feature>